<accession>Q04890</accession>
<accession>A2AS82</accession>
<accession>P70417</accession>
<accession>Q6NXL2</accession>
<gene>
    <name type="primary">Sox12</name>
    <name type="synonym">Sox-12</name>
</gene>
<organism>
    <name type="scientific">Mus musculus</name>
    <name type="common">Mouse</name>
    <dbReference type="NCBI Taxonomy" id="10090"/>
    <lineage>
        <taxon>Eukaryota</taxon>
        <taxon>Metazoa</taxon>
        <taxon>Chordata</taxon>
        <taxon>Craniata</taxon>
        <taxon>Vertebrata</taxon>
        <taxon>Euteleostomi</taxon>
        <taxon>Mammalia</taxon>
        <taxon>Eutheria</taxon>
        <taxon>Euarchontoglires</taxon>
        <taxon>Glires</taxon>
        <taxon>Rodentia</taxon>
        <taxon>Myomorpha</taxon>
        <taxon>Muroidea</taxon>
        <taxon>Muridae</taxon>
        <taxon>Murinae</taxon>
        <taxon>Mus</taxon>
        <taxon>Mus</taxon>
    </lineage>
</organism>
<keyword id="KW-0010">Activator</keyword>
<keyword id="KW-0238">DNA-binding</keyword>
<keyword id="KW-0539">Nucleus</keyword>
<keyword id="KW-1185">Reference proteome</keyword>
<keyword id="KW-0804">Transcription</keyword>
<keyword id="KW-0805">Transcription regulation</keyword>
<reference key="1">
    <citation type="journal article" date="2009" name="PLoS Biol.">
        <title>Lineage-specific biology revealed by a finished genome assembly of the mouse.</title>
        <authorList>
            <person name="Church D.M."/>
            <person name="Goodstadt L."/>
            <person name="Hillier L.W."/>
            <person name="Zody M.C."/>
            <person name="Goldstein S."/>
            <person name="She X."/>
            <person name="Bult C.J."/>
            <person name="Agarwala R."/>
            <person name="Cherry J.L."/>
            <person name="DiCuccio M."/>
            <person name="Hlavina W."/>
            <person name="Kapustin Y."/>
            <person name="Meric P."/>
            <person name="Maglott D."/>
            <person name="Birtle Z."/>
            <person name="Marques A.C."/>
            <person name="Graves T."/>
            <person name="Zhou S."/>
            <person name="Teague B."/>
            <person name="Potamousis K."/>
            <person name="Churas C."/>
            <person name="Place M."/>
            <person name="Herschleb J."/>
            <person name="Runnheim R."/>
            <person name="Forrest D."/>
            <person name="Amos-Landgraf J."/>
            <person name="Schwartz D.C."/>
            <person name="Cheng Z."/>
            <person name="Lindblad-Toh K."/>
            <person name="Eichler E.E."/>
            <person name="Ponting C.P."/>
        </authorList>
    </citation>
    <scope>NUCLEOTIDE SEQUENCE [LARGE SCALE GENOMIC DNA]</scope>
    <source>
        <strain>C57BL/6J</strain>
    </source>
</reference>
<reference key="2">
    <citation type="journal article" date="2004" name="Genome Res.">
        <title>The status, quality, and expansion of the NIH full-length cDNA project: the Mammalian Gene Collection (MGC).</title>
        <authorList>
            <consortium name="The MGC Project Team"/>
        </authorList>
    </citation>
    <scope>NUCLEOTIDE SEQUENCE [LARGE SCALE MRNA]</scope>
    <source>
        <strain>C57BL/6J</strain>
        <tissue>Brain</tissue>
    </source>
</reference>
<reference key="3">
    <citation type="journal article" date="1993" name="Nucleic Acids Res.">
        <title>Seven new members of the Sox gene family expressed during mouse development.</title>
        <authorList>
            <person name="Wright E.M."/>
            <person name="Snopek B."/>
            <person name="Koopman P."/>
        </authorList>
    </citation>
    <scope>NUCLEOTIDE SEQUENCE [MRNA] OF 48-103</scope>
    <scope>DEVELOPMENTAL STAGE</scope>
</reference>
<reference key="4">
    <citation type="journal article" date="1996" name="Genomics">
        <title>Numerous members of the Sox family of HMG box-containing genes are expressed in developing mouse teeth.</title>
        <authorList>
            <person name="Stock D.W."/>
            <person name="Buchanan A.V."/>
            <person name="Zhao Z."/>
            <person name="Weiss K.M."/>
        </authorList>
    </citation>
    <scope>NUCLEOTIDE SEQUENCE [MRNA] OF 51-103</scope>
    <scope>TISSUE SPECIFICITY</scope>
    <source>
        <strain>Swiss Webster</strain>
        <tissue>Embryonic tooth</tissue>
    </source>
</reference>
<reference key="5">
    <citation type="journal article" date="2008" name="Mol. Cell. Biol.">
        <title>Sox12 deletion in the mouse reveals nonreciprocal redundancy with the related Sox4 and Sox11 transcription factors.</title>
        <authorList>
            <person name="Hoser M."/>
            <person name="Potzner M.R."/>
            <person name="Koch J.M."/>
            <person name="Boesl M.R."/>
            <person name="Wegner M."/>
            <person name="Sock E."/>
        </authorList>
    </citation>
    <scope>FUNCTION</scope>
    <scope>DEVELOPMENTAL STAGE</scope>
    <scope>DISRUPTION PHENOTYPE</scope>
</reference>
<reference key="6">
    <citation type="journal article" date="2008" name="Nucleic Acids Res.">
        <title>The three SoxC proteins--Sox4, Sox11 and Sox12--exhibit overlapping expression patterns and molecular properties.</title>
        <authorList>
            <person name="Dy P."/>
            <person name="Penzo-Mendez A."/>
            <person name="Wang H."/>
            <person name="Pedraza C.E."/>
            <person name="Macklin W.B."/>
            <person name="Lefebvre V."/>
        </authorList>
    </citation>
    <scope>FUNCTION</scope>
    <scope>DEVELOPMENTAL STAGE</scope>
</reference>
<reference key="7">
    <citation type="journal article" date="2010" name="Nat. Commun.">
        <title>Organogenesis relies on SoxC transcription factors for the survival of neural and mesenchymal progenitors.</title>
        <authorList>
            <person name="Bhattaram P."/>
            <person name="Penzo-Mendez A."/>
            <person name="Sock E."/>
            <person name="Colmenares C."/>
            <person name="Kaneko K.J."/>
            <person name="Vassilev A."/>
            <person name="Depamphilis M.L."/>
            <person name="Wegner M."/>
            <person name="Lefebvre V."/>
        </authorList>
    </citation>
    <scope>FUNCTION</scope>
    <scope>DEVELOPMENTAL STAGE</scope>
    <scope>DISRUPTION PHENOTYPE</scope>
</reference>
<reference key="8">
    <citation type="journal article" date="2018" name="J. Exp. Med.">
        <title>Sox12 promotes T reg differentiation in the periphery during colitis.</title>
        <authorList>
            <person name="Tanaka S."/>
            <person name="Suto A."/>
            <person name="Iwamoto T."/>
            <person name="Kageyama T."/>
            <person name="Tamachi T."/>
            <person name="Takatori H."/>
            <person name="Suzuki K."/>
            <person name="Hirose K."/>
            <person name="Ohara O."/>
            <person name="Lefebvre V."/>
            <person name="Nakajima H."/>
        </authorList>
    </citation>
    <scope>FUNCTION</scope>
    <scope>TISSUE SPECIFICITY</scope>
    <scope>INDUCTION BY TCR SIGNALING</scope>
    <scope>DISRUPTION PHENOTYPE</scope>
</reference>
<dbReference type="EMBL" id="AL928568">
    <property type="status" value="NOT_ANNOTATED_CDS"/>
    <property type="molecule type" value="Genomic_DNA"/>
</dbReference>
<dbReference type="EMBL" id="BC067019">
    <property type="protein sequence ID" value="AAH67019.1"/>
    <property type="molecule type" value="mRNA"/>
</dbReference>
<dbReference type="EMBL" id="Z18961">
    <property type="protein sequence ID" value="CAA79486.1"/>
    <property type="molecule type" value="mRNA"/>
</dbReference>
<dbReference type="EMBL" id="U70442">
    <property type="protein sequence ID" value="AAC52860.1"/>
    <property type="molecule type" value="mRNA"/>
</dbReference>
<dbReference type="CCDS" id="CCDS38274.1"/>
<dbReference type="PIR" id="S30240">
    <property type="entry name" value="S30240"/>
</dbReference>
<dbReference type="RefSeq" id="NP_035568.1">
    <property type="nucleotide sequence ID" value="NM_011438.2"/>
</dbReference>
<dbReference type="SMR" id="Q04890"/>
<dbReference type="FunCoup" id="Q04890">
    <property type="interactions" value="160"/>
</dbReference>
<dbReference type="STRING" id="10090.ENSMUSP00000138293"/>
<dbReference type="iPTMnet" id="Q04890"/>
<dbReference type="PhosphoSitePlus" id="Q04890"/>
<dbReference type="PaxDb" id="10090-ENSMUSP00000138293"/>
<dbReference type="ProteomicsDB" id="258712"/>
<dbReference type="Antibodypedia" id="6130">
    <property type="antibodies" value="245 antibodies from 33 providers"/>
</dbReference>
<dbReference type="DNASU" id="20667"/>
<dbReference type="Ensembl" id="ENSMUST00000182625.2">
    <property type="protein sequence ID" value="ENSMUSP00000138293.2"/>
    <property type="gene ID" value="ENSMUSG00000051817.10"/>
</dbReference>
<dbReference type="GeneID" id="20667"/>
<dbReference type="KEGG" id="mmu:20667"/>
<dbReference type="UCSC" id="uc008nfi.1">
    <property type="organism name" value="mouse"/>
</dbReference>
<dbReference type="AGR" id="MGI:98360"/>
<dbReference type="CTD" id="6666"/>
<dbReference type="MGI" id="MGI:98360">
    <property type="gene designation" value="Sox12"/>
</dbReference>
<dbReference type="VEuPathDB" id="HostDB:ENSMUSG00000051817"/>
<dbReference type="eggNOG" id="KOG0527">
    <property type="taxonomic scope" value="Eukaryota"/>
</dbReference>
<dbReference type="GeneTree" id="ENSGT00940000163140"/>
<dbReference type="HOGENOM" id="CLU_043342_0_0_1"/>
<dbReference type="InParanoid" id="Q04890"/>
<dbReference type="OMA" id="CGTPDWS"/>
<dbReference type="OrthoDB" id="6247875at2759"/>
<dbReference type="PhylomeDB" id="Q04890"/>
<dbReference type="BioGRID-ORCS" id="20667">
    <property type="hits" value="8 hits in 80 CRISPR screens"/>
</dbReference>
<dbReference type="ChiTaRS" id="Sox12">
    <property type="organism name" value="mouse"/>
</dbReference>
<dbReference type="PRO" id="PR:Q04890"/>
<dbReference type="Proteomes" id="UP000000589">
    <property type="component" value="Chromosome 2"/>
</dbReference>
<dbReference type="RNAct" id="Q04890">
    <property type="molecule type" value="protein"/>
</dbReference>
<dbReference type="Bgee" id="ENSMUSG00000051817">
    <property type="expression patterns" value="Expressed in cortical plate and 201 other cell types or tissues"/>
</dbReference>
<dbReference type="GO" id="GO:0005654">
    <property type="term" value="C:nucleoplasm"/>
    <property type="evidence" value="ECO:0007669"/>
    <property type="project" value="Ensembl"/>
</dbReference>
<dbReference type="GO" id="GO:0032993">
    <property type="term" value="C:protein-DNA complex"/>
    <property type="evidence" value="ECO:0000314"/>
    <property type="project" value="UniProtKB"/>
</dbReference>
<dbReference type="GO" id="GO:0003677">
    <property type="term" value="F:DNA binding"/>
    <property type="evidence" value="ECO:0000314"/>
    <property type="project" value="UniProtKB"/>
</dbReference>
<dbReference type="GO" id="GO:0001228">
    <property type="term" value="F:DNA-binding transcription activator activity, RNA polymerase II-specific"/>
    <property type="evidence" value="ECO:0000314"/>
    <property type="project" value="GO_Central"/>
</dbReference>
<dbReference type="GO" id="GO:0000976">
    <property type="term" value="F:transcription cis-regulatory region binding"/>
    <property type="evidence" value="ECO:0000314"/>
    <property type="project" value="UniProtKB"/>
</dbReference>
<dbReference type="GO" id="GO:0045591">
    <property type="term" value="P:positive regulation of regulatory T cell differentiation"/>
    <property type="evidence" value="ECO:0000315"/>
    <property type="project" value="UniProtKB"/>
</dbReference>
<dbReference type="GO" id="GO:0045944">
    <property type="term" value="P:positive regulation of transcription by RNA polymerase II"/>
    <property type="evidence" value="ECO:0000314"/>
    <property type="project" value="UniProtKB"/>
</dbReference>
<dbReference type="GO" id="GO:0021510">
    <property type="term" value="P:spinal cord development"/>
    <property type="evidence" value="ECO:0000314"/>
    <property type="project" value="UniProtKB"/>
</dbReference>
<dbReference type="CDD" id="cd22038">
    <property type="entry name" value="HMG-box_SoxC_SOX12"/>
    <property type="match status" value="1"/>
</dbReference>
<dbReference type="FunFam" id="1.10.30.10:FF:000007">
    <property type="entry name" value="Transcription factor SOX"/>
    <property type="match status" value="1"/>
</dbReference>
<dbReference type="Gene3D" id="1.10.30.10">
    <property type="entry name" value="High mobility group box domain"/>
    <property type="match status" value="1"/>
</dbReference>
<dbReference type="InterPro" id="IPR009071">
    <property type="entry name" value="HMG_box_dom"/>
</dbReference>
<dbReference type="InterPro" id="IPR036910">
    <property type="entry name" value="HMG_box_dom_sf"/>
</dbReference>
<dbReference type="InterPro" id="IPR017386">
    <property type="entry name" value="SOX-12/11/4"/>
</dbReference>
<dbReference type="InterPro" id="IPR050140">
    <property type="entry name" value="SRY-related_HMG-box_TF-like"/>
</dbReference>
<dbReference type="PANTHER" id="PTHR10270">
    <property type="entry name" value="SOX TRANSCRIPTION FACTOR"/>
    <property type="match status" value="1"/>
</dbReference>
<dbReference type="PANTHER" id="PTHR10270:SF221">
    <property type="entry name" value="TRANSCRIPTION FACTOR SOX-12"/>
    <property type="match status" value="1"/>
</dbReference>
<dbReference type="Pfam" id="PF00505">
    <property type="entry name" value="HMG_box"/>
    <property type="match status" value="1"/>
</dbReference>
<dbReference type="PIRSF" id="PIRSF038098">
    <property type="entry name" value="SOX-12/11/4a"/>
    <property type="match status" value="1"/>
</dbReference>
<dbReference type="SMART" id="SM00398">
    <property type="entry name" value="HMG"/>
    <property type="match status" value="1"/>
</dbReference>
<dbReference type="SUPFAM" id="SSF47095">
    <property type="entry name" value="HMG-box"/>
    <property type="match status" value="1"/>
</dbReference>
<dbReference type="PROSITE" id="PS50118">
    <property type="entry name" value="HMG_BOX_2"/>
    <property type="match status" value="1"/>
</dbReference>
<name>SOX12_MOUSE</name>
<sequence length="314" mass="34083">MVQQRGARAKRDGGPPPPGPGPAAEGAREPGWCKTPSGHIKRPMNAFMVWSQHERRKIMDQWPDMHNAEISKRLGRRWQLLQDSEKIPFVREAERLRLKHMADYPDYKYRPRKKSKGAPAKARPRPPGGGGGGSRLKPGPQLPGRGGRRASGGPLGGGAAAPEDDDEDEEEELLEVRLLETPGRELWRMVPAGRAARGPAERAQGPSGEGAAASAASPTLSEDEEPEEEEEEAATAEEGEEETVVSGEEPLGFLSRMPPGPAGLDCSALDRDPDLLPPSGTSHFEFPDYCTPEVTEMIAGDWRSSSIADLVFTY</sequence>
<comment type="function">
    <text evidence="3 4 5 6">Transcription factor that binds to DNA at the consensus sequence 5'-ACCAAAG-3' (PubMed:18403418, PubMed:18505825, PubMed:30190287). Acts as a transcriptional activator (PubMed:18403418, PubMed:18505825, PubMed:30190287). Binds cooperatively with POU3F2/BRN2 or POU3F1/OCT6 to gene promoters, which enhances transcriptional activation (PubMed:18403418, PubMed:18505825). Involved in the differentiation of naive CD4-positive T-cells into peripherally induced regulatory T (pT reg) cells under inflammatory conditions (PubMed:30190287). Binds to the promoter region of the FOXP3 gene and promotes its transcription, and might thereby contribute to pT reg cell differentiation in the spleen and lymph nodes during inflammation (PubMed:30190287). Plays a redundant role with SOX4 and SOX11 in cell survival of developing tissues such as the neural tube, branchial arches and somites, thereby contributing to organogenesis (PubMed:20596238).</text>
</comment>
<comment type="subcellular location">
    <subcellularLocation>
        <location evidence="1">Nucleus</location>
    </subcellularLocation>
</comment>
<comment type="tissue specificity">
    <text evidence="6 8">Expressed in splenic and thymic regulatory T-cells (at protein level) (PubMed:30190287). Expressed in embryonic molar and incisor teeth (PubMed:8921394).</text>
</comment>
<comment type="developmental stage">
    <text evidence="3 4 5 7">Widely expressed in the developing embryo from 9.5 dpc to 12.5 dpc (PubMed:18403418, PubMed:18505825, PubMed:20596238, PubMed:8441686). Expressed throughout the central and peripheral nervous system, as well as the mesenchyme of many developing organs between 12.5 dpc and 14.5 dpc (PubMed:18403418). Strongly expressed in the lens of the eye, developing cerebral cortex, the dorsal cortical plate, thalamus, hippocampus and cerebellar cortex in the brain at 14.5 dpc (PubMed:18505825). Expressed in skin, spinal cord, lung, liver, intestine, kidney, heart, muscle, cartilage from 14.5 dpc to 18.5 dpc (PubMed:18505825). Abundantly expressed in the brain, heart and lung, with low expression in the liver, pancreas, and small intestine at postnatal day 2 (PubMed:18403418).</text>
</comment>
<comment type="induction">
    <text evidence="6">Induced by T-cell receptor signaling in naive CD4-positive T-cells and in splenic and thymic regulatory T-cells (PubMed:30190287). Up-regulated in splenic T reg cells by dextran sulfate sodium (DSS)-induced colitis (PubMed:30190287).</text>
</comment>
<comment type="disruption phenotype">
    <text evidence="4 5 6">Knockout mice are viable, fertile and morphologically normal (PubMed:18505825, PubMed:20596238). Increased expression of Sox11 in brain and cartilage at 14.5 dpc, with increased expression in liver and kidney at 16.5 dpc (PubMed:18505825). Increased expression of Sox4 in spinal cord and cartilage at 14.5 dpc, with increased expression in liver at 16.5 dpc (PubMed:18505825). Sox12 knockout naive CD4-positive T cells fail to differentiate into pT reg cells in mice with dextran sulfate sodium (DSS)-induced colitis (PubMed:30190287). Sox4, Sox11, and Sox12 triple knockout mice are embryonically lethal and show severe thinning and undulation of the neural tube (PubMed:20596238).</text>
</comment>
<evidence type="ECO:0000255" key="1">
    <source>
        <dbReference type="PROSITE-ProRule" id="PRU00267"/>
    </source>
</evidence>
<evidence type="ECO:0000256" key="2">
    <source>
        <dbReference type="SAM" id="MobiDB-lite"/>
    </source>
</evidence>
<evidence type="ECO:0000269" key="3">
    <source>
    </source>
</evidence>
<evidence type="ECO:0000269" key="4">
    <source>
    </source>
</evidence>
<evidence type="ECO:0000269" key="5">
    <source>
    </source>
</evidence>
<evidence type="ECO:0000269" key="6">
    <source>
    </source>
</evidence>
<evidence type="ECO:0000269" key="7">
    <source>
    </source>
</evidence>
<evidence type="ECO:0000269" key="8">
    <source>
    </source>
</evidence>
<evidence type="ECO:0000305" key="9"/>
<feature type="chain" id="PRO_0000048755" description="Transcription factor SOX-12">
    <location>
        <begin position="1"/>
        <end position="314"/>
    </location>
</feature>
<feature type="DNA-binding region" description="HMG box" evidence="1">
    <location>
        <begin position="40"/>
        <end position="108"/>
    </location>
</feature>
<feature type="region of interest" description="Disordered" evidence="2">
    <location>
        <begin position="1"/>
        <end position="40"/>
    </location>
</feature>
<feature type="region of interest" description="Disordered" evidence="2">
    <location>
        <begin position="101"/>
        <end position="287"/>
    </location>
</feature>
<feature type="region of interest" description="Required for transcriptional activation activity and synergistic coactivation of transcriptional activity with POU3F2" evidence="3">
    <location>
        <begin position="282"/>
        <end position="314"/>
    </location>
</feature>
<feature type="compositionally biased region" description="Gly residues" evidence="2">
    <location>
        <begin position="149"/>
        <end position="159"/>
    </location>
</feature>
<feature type="compositionally biased region" description="Acidic residues" evidence="2">
    <location>
        <begin position="162"/>
        <end position="173"/>
    </location>
</feature>
<feature type="compositionally biased region" description="Basic and acidic residues" evidence="2">
    <location>
        <begin position="174"/>
        <end position="187"/>
    </location>
</feature>
<feature type="compositionally biased region" description="Low complexity" evidence="2">
    <location>
        <begin position="191"/>
        <end position="217"/>
    </location>
</feature>
<feature type="compositionally biased region" description="Acidic residues" evidence="2">
    <location>
        <begin position="221"/>
        <end position="243"/>
    </location>
</feature>
<feature type="sequence conflict" description="In Ref. 4; CAA79486." evidence="9" ref="4">
    <original>V</original>
    <variation>E</variation>
    <location>
        <position position="90"/>
    </location>
</feature>
<protein>
    <recommendedName>
        <fullName>Transcription factor SOX-12</fullName>
    </recommendedName>
</protein>
<proteinExistence type="evidence at protein level"/>